<keyword id="KW-0963">Cytoplasm</keyword>
<keyword id="KW-0489">Methyltransferase</keyword>
<keyword id="KW-1185">Reference proteome</keyword>
<keyword id="KW-0698">rRNA processing</keyword>
<keyword id="KW-0949">S-adenosyl-L-methionine</keyword>
<keyword id="KW-0808">Transferase</keyword>
<comment type="function">
    <text evidence="1">Specifically methylates the N4 position of cytidine in position 1402 (C1402) of 16S rRNA.</text>
</comment>
<comment type="catalytic activity">
    <reaction evidence="1">
        <text>cytidine(1402) in 16S rRNA + S-adenosyl-L-methionine = N(4)-methylcytidine(1402) in 16S rRNA + S-adenosyl-L-homocysteine + H(+)</text>
        <dbReference type="Rhea" id="RHEA:42928"/>
        <dbReference type="Rhea" id="RHEA-COMP:10286"/>
        <dbReference type="Rhea" id="RHEA-COMP:10287"/>
        <dbReference type="ChEBI" id="CHEBI:15378"/>
        <dbReference type="ChEBI" id="CHEBI:57856"/>
        <dbReference type="ChEBI" id="CHEBI:59789"/>
        <dbReference type="ChEBI" id="CHEBI:74506"/>
        <dbReference type="ChEBI" id="CHEBI:82748"/>
        <dbReference type="EC" id="2.1.1.199"/>
    </reaction>
</comment>
<comment type="subcellular location">
    <subcellularLocation>
        <location evidence="1">Cytoplasm</location>
    </subcellularLocation>
</comment>
<comment type="similarity">
    <text evidence="1">Belongs to the methyltransferase superfamily. RsmH family.</text>
</comment>
<dbReference type="EC" id="2.1.1.199" evidence="1"/>
<dbReference type="EMBL" id="AE001437">
    <property type="protein sequence ID" value="AAK80090.1"/>
    <property type="molecule type" value="Genomic_DNA"/>
</dbReference>
<dbReference type="PIR" id="G97162">
    <property type="entry name" value="G97162"/>
</dbReference>
<dbReference type="RefSeq" id="NP_348750.1">
    <property type="nucleotide sequence ID" value="NC_003030.1"/>
</dbReference>
<dbReference type="RefSeq" id="WP_010965431.1">
    <property type="nucleotide sequence ID" value="NC_003030.1"/>
</dbReference>
<dbReference type="SMR" id="Q97H81"/>
<dbReference type="STRING" id="272562.CA_C2132"/>
<dbReference type="GeneID" id="44998613"/>
<dbReference type="KEGG" id="cac:CA_C2132"/>
<dbReference type="PATRIC" id="fig|272562.8.peg.2334"/>
<dbReference type="eggNOG" id="COG0275">
    <property type="taxonomic scope" value="Bacteria"/>
</dbReference>
<dbReference type="HOGENOM" id="CLU_038422_2_0_9"/>
<dbReference type="OrthoDB" id="9806637at2"/>
<dbReference type="Proteomes" id="UP000000814">
    <property type="component" value="Chromosome"/>
</dbReference>
<dbReference type="GO" id="GO:0005737">
    <property type="term" value="C:cytoplasm"/>
    <property type="evidence" value="ECO:0007669"/>
    <property type="project" value="UniProtKB-SubCell"/>
</dbReference>
<dbReference type="GO" id="GO:0071424">
    <property type="term" value="F:rRNA (cytosine-N4-)-methyltransferase activity"/>
    <property type="evidence" value="ECO:0007669"/>
    <property type="project" value="UniProtKB-UniRule"/>
</dbReference>
<dbReference type="GO" id="GO:0070475">
    <property type="term" value="P:rRNA base methylation"/>
    <property type="evidence" value="ECO:0007669"/>
    <property type="project" value="UniProtKB-UniRule"/>
</dbReference>
<dbReference type="FunFam" id="1.10.150.170:FF:000001">
    <property type="entry name" value="Ribosomal RNA small subunit methyltransferase H"/>
    <property type="match status" value="1"/>
</dbReference>
<dbReference type="Gene3D" id="1.10.150.170">
    <property type="entry name" value="Putative methyltransferase TM0872, insert domain"/>
    <property type="match status" value="1"/>
</dbReference>
<dbReference type="Gene3D" id="3.40.50.150">
    <property type="entry name" value="Vaccinia Virus protein VP39"/>
    <property type="match status" value="1"/>
</dbReference>
<dbReference type="HAMAP" id="MF_01007">
    <property type="entry name" value="16SrRNA_methyltr_H"/>
    <property type="match status" value="1"/>
</dbReference>
<dbReference type="InterPro" id="IPR002903">
    <property type="entry name" value="RsmH"/>
</dbReference>
<dbReference type="InterPro" id="IPR023397">
    <property type="entry name" value="SAM-dep_MeTrfase_MraW_recog"/>
</dbReference>
<dbReference type="InterPro" id="IPR029063">
    <property type="entry name" value="SAM-dependent_MTases_sf"/>
</dbReference>
<dbReference type="NCBIfam" id="TIGR00006">
    <property type="entry name" value="16S rRNA (cytosine(1402)-N(4))-methyltransferase RsmH"/>
    <property type="match status" value="1"/>
</dbReference>
<dbReference type="PANTHER" id="PTHR11265:SF0">
    <property type="entry name" value="12S RRNA N4-METHYLCYTIDINE METHYLTRANSFERASE"/>
    <property type="match status" value="1"/>
</dbReference>
<dbReference type="PANTHER" id="PTHR11265">
    <property type="entry name" value="S-ADENOSYL-METHYLTRANSFERASE MRAW"/>
    <property type="match status" value="1"/>
</dbReference>
<dbReference type="Pfam" id="PF01795">
    <property type="entry name" value="Methyltransf_5"/>
    <property type="match status" value="1"/>
</dbReference>
<dbReference type="PIRSF" id="PIRSF004486">
    <property type="entry name" value="MraW"/>
    <property type="match status" value="1"/>
</dbReference>
<dbReference type="SUPFAM" id="SSF81799">
    <property type="entry name" value="Putative methyltransferase TM0872, insert domain"/>
    <property type="match status" value="1"/>
</dbReference>
<dbReference type="SUPFAM" id="SSF53335">
    <property type="entry name" value="S-adenosyl-L-methionine-dependent methyltransferases"/>
    <property type="match status" value="1"/>
</dbReference>
<reference key="1">
    <citation type="journal article" date="2001" name="J. Bacteriol.">
        <title>Genome sequence and comparative analysis of the solvent-producing bacterium Clostridium acetobutylicum.</title>
        <authorList>
            <person name="Noelling J."/>
            <person name="Breton G."/>
            <person name="Omelchenko M.V."/>
            <person name="Makarova K.S."/>
            <person name="Zeng Q."/>
            <person name="Gibson R."/>
            <person name="Lee H.M."/>
            <person name="Dubois J."/>
            <person name="Qiu D."/>
            <person name="Hitti J."/>
            <person name="Wolf Y.I."/>
            <person name="Tatusov R.L."/>
            <person name="Sabathe F."/>
            <person name="Doucette-Stamm L.A."/>
            <person name="Soucaille P."/>
            <person name="Daly M.J."/>
            <person name="Bennett G.N."/>
            <person name="Koonin E.V."/>
            <person name="Smith D.R."/>
        </authorList>
    </citation>
    <scope>NUCLEOTIDE SEQUENCE [LARGE SCALE GENOMIC DNA]</scope>
    <source>
        <strain>ATCC 824 / DSM 792 / JCM 1419 / IAM 19013 / LMG 5710 / NBRC 13948 / NRRL B-527 / VKM B-1787 / 2291 / W</strain>
    </source>
</reference>
<name>RSMH_CLOAB</name>
<feature type="chain" id="PRO_0000108610" description="Ribosomal RNA small subunit methyltransferase H">
    <location>
        <begin position="1"/>
        <end position="312"/>
    </location>
</feature>
<feature type="binding site" evidence="1">
    <location>
        <begin position="33"/>
        <end position="35"/>
    </location>
    <ligand>
        <name>S-adenosyl-L-methionine</name>
        <dbReference type="ChEBI" id="CHEBI:59789"/>
    </ligand>
</feature>
<feature type="binding site" evidence="1">
    <location>
        <position position="53"/>
    </location>
    <ligand>
        <name>S-adenosyl-L-methionine</name>
        <dbReference type="ChEBI" id="CHEBI:59789"/>
    </ligand>
</feature>
<feature type="binding site" evidence="1">
    <location>
        <position position="79"/>
    </location>
    <ligand>
        <name>S-adenosyl-L-methionine</name>
        <dbReference type="ChEBI" id="CHEBI:59789"/>
    </ligand>
</feature>
<feature type="binding site" evidence="1">
    <location>
        <position position="100"/>
    </location>
    <ligand>
        <name>S-adenosyl-L-methionine</name>
        <dbReference type="ChEBI" id="CHEBI:59789"/>
    </ligand>
</feature>
<feature type="binding site" evidence="1">
    <location>
        <position position="107"/>
    </location>
    <ligand>
        <name>S-adenosyl-L-methionine</name>
        <dbReference type="ChEBI" id="CHEBI:59789"/>
    </ligand>
</feature>
<protein>
    <recommendedName>
        <fullName evidence="1">Ribosomal RNA small subunit methyltransferase H</fullName>
        <ecNumber evidence="1">2.1.1.199</ecNumber>
    </recommendedName>
    <alternativeName>
        <fullName evidence="1">16S rRNA m(4)C1402 methyltransferase</fullName>
    </alternativeName>
    <alternativeName>
        <fullName evidence="1">rRNA (cytosine-N(4)-)-methyltransferase RsmH</fullName>
    </alternativeName>
</protein>
<gene>
    <name evidence="1" type="primary">rsmH</name>
    <name type="synonym">mraW</name>
    <name type="ordered locus">CA_C2132</name>
</gene>
<accession>Q97H81</accession>
<proteinExistence type="inferred from homology"/>
<organism>
    <name type="scientific">Clostridium acetobutylicum (strain ATCC 824 / DSM 792 / JCM 1419 / IAM 19013 / LMG 5710 / NBRC 13948 / NRRL B-527 / VKM B-1787 / 2291 / W)</name>
    <dbReference type="NCBI Taxonomy" id="272562"/>
    <lineage>
        <taxon>Bacteria</taxon>
        <taxon>Bacillati</taxon>
        <taxon>Bacillota</taxon>
        <taxon>Clostridia</taxon>
        <taxon>Eubacteriales</taxon>
        <taxon>Clostridiaceae</taxon>
        <taxon>Clostridium</taxon>
    </lineage>
</organism>
<sequence>MEFNHVPVLLEETIENLNIKEDGIYVDCTLGGAGHSSEILKRLSSKGRLIGIDQDKDALKAASERLKEYKNLTFVHDNFSNIKNILEELKIDKVDGILADLGVSSYQLDEPERGFSYMNDAPLDMRMNRDSEFSAYDVINGYDEEKLYSIIKNYGEEKFAKRIAKFIVEKRSEEAINTTFELVDIIKAAIPAKFRRQGPHPAKRTFQAIRIEVNQELEILNKTIEDSVDKLKSEGRICIITFHSLEDRIVKNKYRELQDPCMCPKDIPMCVCGKKPKIKIITRKPIEASSYELEYNPRSRSAKLRVAEKINL</sequence>
<evidence type="ECO:0000255" key="1">
    <source>
        <dbReference type="HAMAP-Rule" id="MF_01007"/>
    </source>
</evidence>